<reference key="1">
    <citation type="journal article" date="2004" name="Genome Res.">
        <title>The status, quality, and expansion of the NIH full-length cDNA project: the Mammalian Gene Collection (MGC).</title>
        <authorList>
            <consortium name="The MGC Project Team"/>
        </authorList>
    </citation>
    <scope>NUCLEOTIDE SEQUENCE [LARGE SCALE MRNA]</scope>
    <source>
        <strain>FVB/N</strain>
        <tissue>Kidney</tissue>
        <tissue>Mammary tumor</tissue>
    </source>
</reference>
<reference key="2">
    <citation type="submission" date="2008-02" db="UniProtKB">
        <authorList>
            <person name="Bienvenut W.V."/>
            <person name="Serrels B."/>
            <person name="Brunton V.G."/>
            <person name="Frame M.C."/>
        </authorList>
    </citation>
    <scope>PROTEIN SEQUENCE OF 2-65; 89-105; 110-132; 157-209; 213-221; 280-288; 304-319 AND 361-371</scope>
    <scope>CLEAVAGE OF INITIATOR METHIONINE</scope>
    <scope>ACETYLATION AT ALA-2</scope>
    <scope>IDENTIFICATION BY MASS SPECTROMETRY</scope>
    <source>
        <tissue>Embryonic fibroblast</tissue>
    </source>
</reference>
<reference key="3">
    <citation type="journal article" date="1993" name="Biochim. Biophys. Acta">
        <title>Molecular cloning of a mouse extracellular signal regulated kinase (erk-1).</title>
        <authorList>
            <person name="Tanner B."/>
            <person name="Mueckler M."/>
        </authorList>
    </citation>
    <scope>NUCLEOTIDE SEQUENCE [MRNA] OF 4-380</scope>
</reference>
<reference key="4">
    <citation type="journal article" date="1991" name="Proc. Natl. Acad. Sci. U.S.A.">
        <title>Mouse Erk-1 gene product is a serine/threonine protein kinase that has the potential to phosphorylate tyrosine.</title>
        <authorList>
            <person name="Crews C.M."/>
            <person name="Alessandrini A.A."/>
            <person name="Erikson R.L."/>
        </authorList>
    </citation>
    <scope>NUCLEOTIDE SEQUENCE [MRNA] OF 10-19</scope>
    <source>
        <tissue>Pre-B cell</tissue>
    </source>
</reference>
<reference key="5">
    <citation type="journal article" date="1991" name="DNA Cell Biol.">
        <title>Molecular analysis of microtubule-associated protein-2 kinase cDNA from mouse and rat brain.</title>
        <authorList>
            <person name="de Miguel C."/>
            <person name="Kligman D."/>
            <person name="Patel J."/>
            <person name="Detera-Wadleigh S.D."/>
        </authorList>
    </citation>
    <scope>NUCLEOTIDE SEQUENCE [MRNA] OF 77-380</scope>
    <source>
        <tissue>Fetal brain</tissue>
    </source>
</reference>
<reference key="6">
    <citation type="submission" date="2007-03" db="UniProtKB">
        <authorList>
            <person name="Lubec G."/>
            <person name="Klug S."/>
        </authorList>
    </citation>
    <scope>PROTEIN SEQUENCE OF 136-153 AND 191-209</scope>
    <scope>IDENTIFICATION BY MASS SPECTROMETRY</scope>
    <source>
        <tissue>Hippocampus</tissue>
    </source>
</reference>
<reference key="7">
    <citation type="journal article" date="1993" name="Gene">
        <title>Novel CDC2-related protein kinases produced in murine hematopoietic stem cells.</title>
        <authorList>
            <person name="Ershler M.A."/>
            <person name="Nagorskaya T.V."/>
            <person name="Visser J.W.M."/>
            <person name="Belyavsky A.V."/>
        </authorList>
    </citation>
    <scope>NUCLEOTIDE SEQUENCE [MRNA] OF 171-209</scope>
    <source>
        <strain>CBA/J</strain>
        <tissue>Bone marrow</tissue>
    </source>
</reference>
<reference key="8">
    <citation type="journal article" date="1992" name="Dokl. Akad. Nauk SSSR">
        <title>Identification of new protein kinase genes, similar to kinases of the cdc2 family and expressed in murine hematopoietic stem cells.</title>
        <authorList>
            <person name="Ershler M.A."/>
            <person name="Nagorskaya T.V."/>
            <person name="Visser J.W.M."/>
            <person name="Belyavsky A.V."/>
        </authorList>
    </citation>
    <scope>NUCLEOTIDE SEQUENCE [MRNA] OF 171-205</scope>
</reference>
<reference key="9">
    <citation type="journal article" date="1999" name="J. Leukoc. Biol.">
        <title>Flt3 signaling involves tyrosyl-phosphorylation of SHP-2 and SHIP and their association with Grb2 and Shc in Baf3/Flt3 cells.</title>
        <authorList>
            <person name="Zhang S."/>
            <person name="Mantel C."/>
            <person name="Broxmeyer H.E."/>
        </authorList>
    </citation>
    <scope>PHOSPHORYLATION IN RESPONSE TO FLT3 SIGNALING</scope>
</reference>
<reference key="10">
    <citation type="journal article" date="2000" name="Blood">
        <title>Flt3 mutations from patients with acute myeloid leukemia induce transformation of 32D cells mediated by the Ras and STAT5 pathways.</title>
        <authorList>
            <person name="Mizuki M."/>
            <person name="Fenski R."/>
            <person name="Halfter H."/>
            <person name="Matsumura I."/>
            <person name="Schmidt R."/>
            <person name="Muller C."/>
            <person name="Gruning W."/>
            <person name="Kratz-Albers K."/>
            <person name="Serve S."/>
            <person name="Steur C."/>
            <person name="Buchner T."/>
            <person name="Kienast J."/>
            <person name="Kanakura Y."/>
            <person name="Berdel W.E."/>
            <person name="Serve H."/>
        </authorList>
    </citation>
    <scope>PHOSPHORYLATION IN RESPONSE TO FLT3 SIGNALING</scope>
</reference>
<reference key="11">
    <citation type="journal article" date="2001" name="Dev. Cell">
        <title>PEA-15 mediates cytoplasmic sequestration of ERK MAP kinase.</title>
        <authorList>
            <person name="Formstecher E."/>
            <person name="Ramos J.W."/>
            <person name="Fauquet M."/>
            <person name="Calderwood D.A."/>
            <person name="Hsieh J.C."/>
            <person name="Canton B."/>
            <person name="Nguyen X.T."/>
            <person name="Barnier J.V."/>
            <person name="Camonis J."/>
            <person name="Ginsberg M.H."/>
            <person name="Chneiweiss H."/>
        </authorList>
    </citation>
    <scope>INTERACTION WITH PEA15</scope>
    <scope>SUBCELLULAR LOCATION</scope>
    <scope>FUNCTION OF THE MAPK ERK CASCADE</scope>
</reference>
<reference key="12">
    <citation type="journal article" date="2002" name="Nat. Cell Biol.">
        <title>Molecular interpretation of ERK signal duration by immediate early gene products.</title>
        <authorList>
            <person name="Murphy L.O."/>
            <person name="Smith S."/>
            <person name="Chen R.H."/>
            <person name="Fingar D.C."/>
            <person name="Blenis J."/>
        </authorList>
    </citation>
    <scope>FUNCTION IN PHOSPHORYLATION OF FOS</scope>
    <scope>SUBCELLULAR LOCATION</scope>
</reference>
<reference key="13">
    <citation type="journal article" date="2004" name="Proc. Natl. Acad. Sci. U.S.A.">
        <title>Modular construction of a signaling scaffold: MORG1 interacts with components of the ERK cascade and links ERK signaling to specific agonists.</title>
        <authorList>
            <person name="Vomastek T."/>
            <person name="Schaeffer H.-J."/>
            <person name="Tarcsafalvi A."/>
            <person name="Smolkin M.E."/>
            <person name="Bissonette E.A."/>
            <person name="Weber M.J."/>
        </authorList>
    </citation>
    <scope>INTERACTION WITH MORG1</scope>
</reference>
<reference key="14">
    <citation type="journal article" date="2005" name="Cancer Res.">
        <title>bHLH-zip transcription factor Spz1 mediates mitogen-activated protein kinase cell proliferation, transformation, and tumorigenesis.</title>
        <authorList>
            <person name="Hsu S.-H."/>
            <person name="Hsieh-Li H.-M."/>
            <person name="Huang H.-Y."/>
            <person name="Huang P.-H."/>
            <person name="Li H."/>
        </authorList>
    </citation>
    <scope>PHOSPHORYLATION OF SPZ1</scope>
</reference>
<reference key="15">
    <citation type="journal article" date="2005" name="J. Biol. Chem.">
        <title>GIT1 is a scaffold for ERK1/2 activation in focal adhesions.</title>
        <authorList>
            <person name="Yin G."/>
            <person name="Zheng Q."/>
            <person name="Yan C."/>
            <person name="Berk B.C."/>
        </authorList>
    </citation>
    <scope>INTERACTION WITH GIT1</scope>
    <scope>SUBCELLULAR LOCATION</scope>
</reference>
<reference key="16">
    <citation type="journal article" date="2005" name="J. Biol. Chem.">
        <title>Features of the catalytic domains and C termini of the MAPK signal-integrating kinases Mnk1 and Mnk2 determine their differing activities and regulatory properties.</title>
        <authorList>
            <person name="Parra J.L."/>
            <person name="Buxade M."/>
            <person name="Proud C.G."/>
        </authorList>
    </citation>
    <scope>INTERACTION WITH MKNK2</scope>
</reference>
<reference key="17">
    <citation type="journal article" date="2007" name="J. Immunol.">
        <title>Quantitative time-resolved phosphoproteomic analysis of mast cell signaling.</title>
        <authorList>
            <person name="Cao L."/>
            <person name="Yu K."/>
            <person name="Banh C."/>
            <person name="Nguyen V."/>
            <person name="Ritz A."/>
            <person name="Raphael B.J."/>
            <person name="Kawakami Y."/>
            <person name="Kawakami T."/>
            <person name="Salomon A.R."/>
        </authorList>
    </citation>
    <scope>PHOSPHORYLATION [LARGE SCALE ANALYSIS] AT THR-203 AND TYR-205</scope>
    <scope>IDENTIFICATION BY MASS SPECTROMETRY [LARGE SCALE ANALYSIS]</scope>
    <source>
        <tissue>Mast cell</tissue>
    </source>
</reference>
<reference key="18">
    <citation type="journal article" date="2008" name="J. Proteome Res.">
        <title>Large-scale identification and evolution indexing of tyrosine phosphorylation sites from murine brain.</title>
        <authorList>
            <person name="Ballif B.A."/>
            <person name="Carey G.R."/>
            <person name="Sunyaev S.R."/>
            <person name="Gygi S.P."/>
        </authorList>
    </citation>
    <scope>PHOSPHORYLATION [LARGE SCALE ANALYSIS] AT THR-203 AND TYR-205</scope>
    <scope>IDENTIFICATION BY MASS SPECTROMETRY [LARGE SCALE ANALYSIS]</scope>
    <source>
        <tissue>Brain</tissue>
    </source>
</reference>
<reference key="19">
    <citation type="journal article" date="2009" name="Immunity">
        <title>The phagosomal proteome in interferon-gamma-activated macrophages.</title>
        <authorList>
            <person name="Trost M."/>
            <person name="English L."/>
            <person name="Lemieux S."/>
            <person name="Courcelles M."/>
            <person name="Desjardins M."/>
            <person name="Thibault P."/>
        </authorList>
    </citation>
    <scope>IDENTIFICATION BY MASS SPECTROMETRY [LARGE SCALE ANALYSIS]</scope>
</reference>
<reference key="20">
    <citation type="journal article" date="2009" name="Mol. Cell. Proteomics">
        <title>Large scale localization of protein phosphorylation by use of electron capture dissociation mass spectrometry.</title>
        <authorList>
            <person name="Sweet S.M."/>
            <person name="Bailey C.M."/>
            <person name="Cunningham D.L."/>
            <person name="Heath J.K."/>
            <person name="Cooper H.J."/>
        </authorList>
    </citation>
    <scope>PHOSPHORYLATION [LARGE SCALE ANALYSIS] AT THR-203 AND TYR-205</scope>
    <scope>IDENTIFICATION BY MASS SPECTROMETRY [LARGE SCALE ANALYSIS]</scope>
    <source>
        <tissue>Embryonic fibroblast</tissue>
    </source>
</reference>
<reference key="21">
    <citation type="journal article" date="2010" name="Cell">
        <title>A tissue-specific atlas of mouse protein phosphorylation and expression.</title>
        <authorList>
            <person name="Huttlin E.L."/>
            <person name="Jedrychowski M.P."/>
            <person name="Elias J.E."/>
            <person name="Goswami T."/>
            <person name="Rad R."/>
            <person name="Beausoleil S.A."/>
            <person name="Villen J."/>
            <person name="Haas W."/>
            <person name="Sowa M.E."/>
            <person name="Gygi S.P."/>
        </authorList>
    </citation>
    <scope>PHOSPHORYLATION [LARGE SCALE ANALYSIS] AT THR-203 AND TYR-205</scope>
    <scope>IDENTIFICATION BY MASS SPECTROMETRY [LARGE SCALE ANALYSIS]</scope>
    <source>
        <tissue>Brain</tissue>
        <tissue>Brown adipose tissue</tissue>
        <tissue>Heart</tissue>
        <tissue>Kidney</tissue>
        <tissue>Lung</tissue>
        <tissue>Pancreas</tissue>
        <tissue>Spleen</tissue>
        <tissue>Testis</tissue>
    </source>
</reference>
<reference key="22">
    <citation type="journal article" date="2011" name="J. Biol. Chem.">
        <title>Protein-tyrosine phosphatase DEP-1 controls receptor tyrosine kinase FLT3 signaling.</title>
        <authorList>
            <person name="Arora D."/>
            <person name="Stopp S."/>
            <person name="Bohmer S.A."/>
            <person name="Schons J."/>
            <person name="Godfrey R."/>
            <person name="Masson K."/>
            <person name="Razumovskaya E."/>
            <person name="Ronnstrand L."/>
            <person name="Tanzer S."/>
            <person name="Bauer R."/>
            <person name="Bohmer F.D."/>
            <person name="Muller J.P."/>
        </authorList>
    </citation>
    <scope>PHOSPHORYLATION IN RESPONSE TO FLT3 SIGNALING</scope>
</reference>
<reference key="23">
    <citation type="journal article" date="2006" name="Growth Factors">
        <title>The extracellular signal-regulated kinase: multiple substrates regulate diverse cellular functions.</title>
        <authorList>
            <person name="Yoon S."/>
            <person name="Seger R."/>
        </authorList>
    </citation>
    <scope>REVIEW ON FUNCTION</scope>
</reference>
<reference key="24">
    <citation type="journal article" date="2009" name="BioFactors">
        <title>The ERK signaling cascade--views from different subcellular compartments.</title>
        <authorList>
            <person name="Yao Z."/>
            <person name="Seger R."/>
        </authorList>
    </citation>
    <scope>REVIEW ON FUNCTION</scope>
    <scope>REVIEW ON SUBCELLULAR LOCATION</scope>
</reference>
<reference key="25">
    <citation type="journal article" date="2011" name="Genes Cancer">
        <title>The ERK cascade: distinct functions within various subcellular organelles.</title>
        <authorList>
            <person name="Wortzel I."/>
            <person name="Seger R."/>
        </authorList>
    </citation>
    <scope>REVIEW ON ACTIVITY REGULATION</scope>
    <scope>REVIEW ON FUNCTION</scope>
</reference>
<comment type="function">
    <text evidence="6 7">Serine/threonine kinase which acts as an essential component of the MAP kinase signal transduction pathway. MAPK1/ERK2 and MAPK3/ERK1 are the 2 MAPKs which play an important role in the MAPK/ERK cascade. They participate also in a signaling cascade initiated by activated KIT and KITLG/SCF. Depending on the cellular context, the MAPK/ERK cascade mediates diverse biological functions such as cell growth, adhesion, survival and differentiation through the regulation of transcription, translation, cytoskeletal rearrangements. The MAPK/ERK cascade also plays a role in initiation and regulation of meiosis, mitosis, and postmitotic functions in differentiated cells by phosphorylating a number of transcription factors. About 160 substrates have already been discovered for ERKs. Many of these substrates are localized in the nucleus, and seem to participate in the regulation of transcription upon stimulation. However, other substrates are found in the cytosol as well as in other cellular organelles, and those are responsible for processes such as translation, mitosis and apoptosis. Moreover, the MAPK/ERK cascade is also involved in the regulation of the endosomal dynamics, including lysosome processing and endosome cycling through the perinuclear recycling compartment (PNRC); as well as in the fragmentation of the Golgi apparatus during mitosis. The substrates include transcription factors (such as ATF2, BCL6, ELK1, ERF, FOS, HSF4 or SPZ1), cytoskeletal elements (such as CANX, CTTN, GJA1, MAP2, MAPT, PXN, SORBS3 or STMN1), regulators of apoptosis (such as BAD, BTG2, CASP9, DAPK1, IER3, MCL1 or PPARG), regulators of translation (such as EIF4EBP1) and a variety of other signaling-related molecules (like ARHGEF2, DEPTOR, FRS2 or GRB10). Protein kinases (such as RAF1, RPS6KA1/RSK1, RPS6KA3/RSK2, RPS6KA2/RSK3, RPS6KA6/RSK4, SYK, MKNK1/MNK1, MKNK2/MNK2, RPS6KA5/MSK1, RPS6KA4/MSK2, MAPKAPK3 or MAPKAPK5) and phosphatases (such as DUSP1, DUSP4, DUSP6 or DUSP16) are other substrates which enable the propagation the MAPK/ERK signal to additional cytosolic and nuclear targets, thereby extending the specificity of the cascade.</text>
</comment>
<comment type="catalytic activity">
    <reaction>
        <text>L-seryl-[protein] + ATP = O-phospho-L-seryl-[protein] + ADP + H(+)</text>
        <dbReference type="Rhea" id="RHEA:17989"/>
        <dbReference type="Rhea" id="RHEA-COMP:9863"/>
        <dbReference type="Rhea" id="RHEA-COMP:11604"/>
        <dbReference type="ChEBI" id="CHEBI:15378"/>
        <dbReference type="ChEBI" id="CHEBI:29999"/>
        <dbReference type="ChEBI" id="CHEBI:30616"/>
        <dbReference type="ChEBI" id="CHEBI:83421"/>
        <dbReference type="ChEBI" id="CHEBI:456216"/>
        <dbReference type="EC" id="2.7.11.24"/>
    </reaction>
</comment>
<comment type="catalytic activity">
    <reaction>
        <text>L-threonyl-[protein] + ATP = O-phospho-L-threonyl-[protein] + ADP + H(+)</text>
        <dbReference type="Rhea" id="RHEA:46608"/>
        <dbReference type="Rhea" id="RHEA-COMP:11060"/>
        <dbReference type="Rhea" id="RHEA-COMP:11605"/>
        <dbReference type="ChEBI" id="CHEBI:15378"/>
        <dbReference type="ChEBI" id="CHEBI:30013"/>
        <dbReference type="ChEBI" id="CHEBI:30616"/>
        <dbReference type="ChEBI" id="CHEBI:61977"/>
        <dbReference type="ChEBI" id="CHEBI:456216"/>
        <dbReference type="EC" id="2.7.11.24"/>
    </reaction>
</comment>
<comment type="cofactor">
    <cofactor evidence="1">
        <name>Mg(2+)</name>
        <dbReference type="ChEBI" id="CHEBI:18420"/>
    </cofactor>
</comment>
<comment type="activity regulation">
    <text>Phosphorylated by MAP2K1/MEK1 and MAP2K2/MEK2 on Thr-203 and Tyr-205 in response to external stimuli like insulin or NGF. Both phosphorylations are required for activity. This phosphorylation causes dramatic conformational changes, which enable full activation and interaction of MAPK1/ERK2 with its substrates. Dephosphorylated and inactivated by DUSP3, DUSP6 and DUSP9.</text>
</comment>
<comment type="subunit">
    <text evidence="2 3 6 8 9 10">Binds both upstream activators and downstream substrates in multimolecular complexes. Found in a complex with at least BRAF, HRAS, MAP2K1/MEK1, MAPK3 and RGS14. Interacts with TPR. Interacts with ADAM15, ARRB2, CANX, DAPK1 (via death domain), HSF4, IER3, MAP2K1/MEK1, NISCH, and SGK1 (By similarity). Interacts with MORG1 (PubMed:15118098). Interacts with PEA15 (PubMed:11702783). Interacts with isoform 1 of MKNK2 and this binding prevents from dephosphorylation and inactivation (PubMed:16162500). Interacts with CDKN2AIP. Interacts with HSF1 (via D domain and preferentially with hyperphosphorylated form); this interaction occurs upon heat shock. Interacts with CAVIN4 (By similarity). Interacts with GIT1; this interaction is necessary for MAPK3 localization to focal adhesions (PubMed:15923189). Interacts with ZNF263 (By similarity). Interacts with EBF4.</text>
</comment>
<comment type="interaction">
    <interactant intactId="EBI-397682">
        <id>Q63844</id>
    </interactant>
    <interactant intactId="EBI-3043905">
        <id>Q60793</id>
        <label>Klf4</label>
    </interactant>
    <organismsDiffer>false</organismsDiffer>
    <experiments>3</experiments>
</comment>
<comment type="subcellular location">
    <subcellularLocation>
        <location evidence="2">Cytoplasm</location>
    </subcellularLocation>
    <subcellularLocation>
        <location>Nucleus</location>
    </subcellularLocation>
    <subcellularLocation>
        <location evidence="2">Membrane</location>
        <location evidence="2">Caveola</location>
    </subcellularLocation>
    <subcellularLocation>
        <location evidence="9">Cell junction</location>
        <location evidence="9">Focal adhesion</location>
    </subcellularLocation>
    <text evidence="3 6">Autophosphorylation at Thr-207 promotes nuclear localization (By similarity). PEA15-binding redirects the biological outcome of MAPK3 kinase-signaling by sequestering MAPK3 into the cytoplasm (PubMed:11702783).</text>
</comment>
<comment type="domain">
    <text>The TXY motif contains the threonine and tyrosine residues whose phosphorylation activates the MAP kinases.</text>
</comment>
<comment type="PTM">
    <text evidence="1">Dually phosphorylated on Thr-203 and Tyr-205, which activates the enzyme. Ligand-activated ALK induces tyrosine phosphorylation (By similarity). Dephosphorylated by PTPRJ at Tyr-205 (By similarity). Autophosphorylated on threonine and tyrosine residues in vitro. Phosphorylated upon FLT3 and KIT signaling (By similarity).</text>
</comment>
<comment type="PTM">
    <text evidence="3">Ubiquitinated by TRIM15 via 'Lys-63'-linked ubiquitination; leading to activation. Deubiquitinated by CYLD.</text>
</comment>
<comment type="similarity">
    <text evidence="12">Belongs to the protein kinase superfamily. CMGC Ser/Thr protein kinase family. MAP kinase subfamily.</text>
</comment>
<protein>
    <recommendedName>
        <fullName>Mitogen-activated protein kinase 3</fullName>
        <shortName>MAP kinase 3</shortName>
        <shortName>MAPK 3</shortName>
        <ecNumber>2.7.11.24</ecNumber>
    </recommendedName>
    <alternativeName>
        <fullName>ERT2</fullName>
    </alternativeName>
    <alternativeName>
        <fullName>Extracellular signal-regulated kinase 1</fullName>
        <shortName>ERK-1</shortName>
    </alternativeName>
    <alternativeName>
        <fullName>Insulin-stimulated MAP2 kinase</fullName>
    </alternativeName>
    <alternativeName>
        <fullName>MAP kinase isoform p44</fullName>
        <shortName>p44-MAPK</shortName>
    </alternativeName>
    <alternativeName>
        <fullName>MNK1</fullName>
    </alternativeName>
    <alternativeName>
        <fullName>Microtubule-associated protein 2 kinase</fullName>
    </alternativeName>
    <alternativeName>
        <fullName>p44-ERK1</fullName>
    </alternativeName>
</protein>
<dbReference type="EC" id="2.7.11.24"/>
<dbReference type="EMBL" id="BC013754">
    <property type="protein sequence ID" value="AAH13754.1"/>
    <property type="molecule type" value="mRNA"/>
</dbReference>
<dbReference type="EMBL" id="BC029712">
    <property type="protein sequence ID" value="AAH29712.1"/>
    <property type="molecule type" value="mRNA"/>
</dbReference>
<dbReference type="EMBL" id="S58470">
    <property type="protein sequence ID" value="AAB19973.1"/>
    <property type="molecule type" value="mRNA"/>
</dbReference>
<dbReference type="EMBL" id="X64605">
    <property type="protein sequence ID" value="CAA45889.1"/>
    <property type="molecule type" value="mRNA"/>
</dbReference>
<dbReference type="CCDS" id="CCDS21841.1"/>
<dbReference type="PIR" id="S28184">
    <property type="entry name" value="S28184"/>
</dbReference>
<dbReference type="RefSeq" id="NP_036082.1">
    <property type="nucleotide sequence ID" value="NM_011952.2"/>
</dbReference>
<dbReference type="SMR" id="Q63844"/>
<dbReference type="BioGRID" id="204970">
    <property type="interactions" value="30"/>
</dbReference>
<dbReference type="CORUM" id="Q63844"/>
<dbReference type="DIP" id="DIP-31078N"/>
<dbReference type="ELM" id="Q63844"/>
<dbReference type="FunCoup" id="Q63844">
    <property type="interactions" value="2955"/>
</dbReference>
<dbReference type="IntAct" id="Q63844">
    <property type="interactions" value="10"/>
</dbReference>
<dbReference type="MINT" id="Q63844"/>
<dbReference type="STRING" id="10090.ENSMUSP00000051619"/>
<dbReference type="BindingDB" id="Q63844"/>
<dbReference type="ChEMBL" id="CHEMBL5510"/>
<dbReference type="iPTMnet" id="Q63844"/>
<dbReference type="PhosphoSitePlus" id="Q63844"/>
<dbReference type="SwissPalm" id="Q63844"/>
<dbReference type="jPOST" id="Q63844"/>
<dbReference type="PaxDb" id="10090-ENSMUSP00000051619"/>
<dbReference type="PeptideAtlas" id="Q63844"/>
<dbReference type="ProteomicsDB" id="295945"/>
<dbReference type="Pumba" id="Q63844"/>
<dbReference type="Antibodypedia" id="1203">
    <property type="antibodies" value="2312 antibodies from 58 providers"/>
</dbReference>
<dbReference type="DNASU" id="26417"/>
<dbReference type="Ensembl" id="ENSMUST00000057669.16">
    <property type="protein sequence ID" value="ENSMUSP00000051619.10"/>
    <property type="gene ID" value="ENSMUSG00000063065.14"/>
</dbReference>
<dbReference type="GeneID" id="26417"/>
<dbReference type="KEGG" id="mmu:26417"/>
<dbReference type="UCSC" id="uc009jsm.1">
    <property type="organism name" value="mouse"/>
</dbReference>
<dbReference type="AGR" id="MGI:1346859"/>
<dbReference type="CTD" id="5595"/>
<dbReference type="MGI" id="MGI:1346859">
    <property type="gene designation" value="Mapk3"/>
</dbReference>
<dbReference type="VEuPathDB" id="HostDB:ENSMUSG00000063065"/>
<dbReference type="eggNOG" id="KOG0660">
    <property type="taxonomic scope" value="Eukaryota"/>
</dbReference>
<dbReference type="GeneTree" id="ENSGT00940000160691"/>
<dbReference type="InParanoid" id="Q63844"/>
<dbReference type="OMA" id="CYFLYQM"/>
<dbReference type="OrthoDB" id="192887at2759"/>
<dbReference type="PhylomeDB" id="Q63844"/>
<dbReference type="TreeFam" id="TF105097"/>
<dbReference type="Reactome" id="R-MMU-110056">
    <property type="pathway name" value="MAPK3 (ERK1) activation"/>
</dbReference>
<dbReference type="Reactome" id="R-MMU-112409">
    <property type="pathway name" value="RAF-independent MAPK1/3 activation"/>
</dbReference>
<dbReference type="Reactome" id="R-MMU-1169408">
    <property type="pathway name" value="ISG15 antiviral mechanism"/>
</dbReference>
<dbReference type="Reactome" id="R-MMU-1181150">
    <property type="pathway name" value="Signaling by NODAL"/>
</dbReference>
<dbReference type="Reactome" id="R-MMU-1295596">
    <property type="pathway name" value="Spry regulation of FGF signaling"/>
</dbReference>
<dbReference type="Reactome" id="R-MMU-1502540">
    <property type="pathway name" value="Signaling by Activin"/>
</dbReference>
<dbReference type="Reactome" id="R-MMU-162658">
    <property type="pathway name" value="Golgi Cisternae Pericentriolar Stack Reorganization"/>
</dbReference>
<dbReference type="Reactome" id="R-MMU-170968">
    <property type="pathway name" value="Frs2-mediated activation"/>
</dbReference>
<dbReference type="Reactome" id="R-MMU-198753">
    <property type="pathway name" value="ERK/MAPK targets"/>
</dbReference>
<dbReference type="Reactome" id="R-MMU-202670">
    <property type="pathway name" value="ERKs are inactivated"/>
</dbReference>
<dbReference type="Reactome" id="R-MMU-2029482">
    <property type="pathway name" value="Regulation of actin dynamics for phagocytic cup formation"/>
</dbReference>
<dbReference type="Reactome" id="R-MMU-2173795">
    <property type="pathway name" value="Downregulation of SMAD2/3:SMAD4 transcriptional activity"/>
</dbReference>
<dbReference type="Reactome" id="R-MMU-2173796">
    <property type="pathway name" value="SMAD2/SMAD3:SMAD4 heterotrimer regulates transcription"/>
</dbReference>
<dbReference type="Reactome" id="R-MMU-2559580">
    <property type="pathway name" value="Oxidative Stress Induced Senescence"/>
</dbReference>
<dbReference type="Reactome" id="R-MMU-2559582">
    <property type="pathway name" value="Senescence-Associated Secretory Phenotype (SASP)"/>
</dbReference>
<dbReference type="Reactome" id="R-MMU-2559585">
    <property type="pathway name" value="Oncogene Induced Senescence"/>
</dbReference>
<dbReference type="Reactome" id="R-MMU-2871796">
    <property type="pathway name" value="FCERI mediated MAPK activation"/>
</dbReference>
<dbReference type="Reactome" id="R-MMU-3371453">
    <property type="pathway name" value="Regulation of HSF1-mediated heat shock response"/>
</dbReference>
<dbReference type="Reactome" id="R-MMU-375165">
    <property type="pathway name" value="NCAM signaling for neurite out-growth"/>
</dbReference>
<dbReference type="Reactome" id="R-MMU-445144">
    <property type="pathway name" value="Signal transduction by L1"/>
</dbReference>
<dbReference type="Reactome" id="R-MMU-450341">
    <property type="pathway name" value="Activation of the AP-1 family of transcription factors"/>
</dbReference>
<dbReference type="Reactome" id="R-MMU-456926">
    <property type="pathway name" value="Thrombin signalling through proteinase activated receptors (PARs)"/>
</dbReference>
<dbReference type="Reactome" id="R-MMU-5654726">
    <property type="pathway name" value="Negative regulation of FGFR1 signaling"/>
</dbReference>
<dbReference type="Reactome" id="R-MMU-5654727">
    <property type="pathway name" value="Negative regulation of FGFR2 signaling"/>
</dbReference>
<dbReference type="Reactome" id="R-MMU-5654732">
    <property type="pathway name" value="Negative regulation of FGFR3 signaling"/>
</dbReference>
<dbReference type="Reactome" id="R-MMU-5654733">
    <property type="pathway name" value="Negative regulation of FGFR4 signaling"/>
</dbReference>
<dbReference type="Reactome" id="R-MMU-5663213">
    <property type="pathway name" value="RHO GTPases Activate WASPs and WAVEs"/>
</dbReference>
<dbReference type="Reactome" id="R-MMU-5668599">
    <property type="pathway name" value="RHO GTPases Activate NADPH Oxidases"/>
</dbReference>
<dbReference type="Reactome" id="R-MMU-5673001">
    <property type="pathway name" value="RAF/MAP kinase cascade"/>
</dbReference>
<dbReference type="Reactome" id="R-MMU-5674135">
    <property type="pathway name" value="MAP2K and MAPK activation"/>
</dbReference>
<dbReference type="Reactome" id="R-MMU-5674499">
    <property type="pathway name" value="Negative feedback regulation of MAPK pathway"/>
</dbReference>
<dbReference type="Reactome" id="R-MMU-5675221">
    <property type="pathway name" value="Negative regulation of MAPK pathway"/>
</dbReference>
<dbReference type="Reactome" id="R-MMU-6811558">
    <property type="pathway name" value="PI5P, PP2A and IER3 Regulate PI3K/AKT Signaling"/>
</dbReference>
<dbReference type="Reactome" id="R-MMU-73728">
    <property type="pathway name" value="RNA Polymerase I Promoter Opening"/>
</dbReference>
<dbReference type="Reactome" id="R-MMU-74749">
    <property type="pathway name" value="Signal attenuation"/>
</dbReference>
<dbReference type="Reactome" id="R-MMU-877300">
    <property type="pathway name" value="Interferon gamma signaling"/>
</dbReference>
<dbReference type="Reactome" id="R-MMU-881907">
    <property type="pathway name" value="Gastrin-CREB signalling pathway via PKC and MAPK"/>
</dbReference>
<dbReference type="Reactome" id="R-MMU-9627069">
    <property type="pathway name" value="Regulation of the apoptosome activity"/>
</dbReference>
<dbReference type="Reactome" id="R-MMU-9732724">
    <property type="pathway name" value="IFNG signaling activates MAPKs"/>
</dbReference>
<dbReference type="Reactome" id="R-MMU-982772">
    <property type="pathway name" value="Growth hormone receptor signaling"/>
</dbReference>
<dbReference type="Reactome" id="R-MMU-9856649">
    <property type="pathway name" value="Transcriptional and post-translational regulation of MITF-M expression and activity"/>
</dbReference>
<dbReference type="BioGRID-ORCS" id="26417">
    <property type="hits" value="3 hits in 81 CRISPR screens"/>
</dbReference>
<dbReference type="ChiTaRS" id="Mapk3">
    <property type="organism name" value="mouse"/>
</dbReference>
<dbReference type="PRO" id="PR:Q63844"/>
<dbReference type="Proteomes" id="UP000000589">
    <property type="component" value="Chromosome 7"/>
</dbReference>
<dbReference type="RNAct" id="Q63844">
    <property type="molecule type" value="protein"/>
</dbReference>
<dbReference type="Bgee" id="ENSMUSG00000063065">
    <property type="expression patterns" value="Expressed in granulocyte and 264 other cell types or tissues"/>
</dbReference>
<dbReference type="ExpressionAtlas" id="Q63844">
    <property type="expression patterns" value="baseline and differential"/>
</dbReference>
<dbReference type="GO" id="GO:0005901">
    <property type="term" value="C:caveola"/>
    <property type="evidence" value="ECO:0000250"/>
    <property type="project" value="UniProtKB"/>
</dbReference>
<dbReference type="GO" id="GO:0036064">
    <property type="term" value="C:ciliary basal body"/>
    <property type="evidence" value="ECO:0007669"/>
    <property type="project" value="Ensembl"/>
</dbReference>
<dbReference type="GO" id="GO:0005737">
    <property type="term" value="C:cytoplasm"/>
    <property type="evidence" value="ECO:0000314"/>
    <property type="project" value="MGI"/>
</dbReference>
<dbReference type="GO" id="GO:0005856">
    <property type="term" value="C:cytoskeleton"/>
    <property type="evidence" value="ECO:0000304"/>
    <property type="project" value="UniProtKB"/>
</dbReference>
<dbReference type="GO" id="GO:0005829">
    <property type="term" value="C:cytosol"/>
    <property type="evidence" value="ECO:0000314"/>
    <property type="project" value="MGI"/>
</dbReference>
<dbReference type="GO" id="GO:0005769">
    <property type="term" value="C:early endosome"/>
    <property type="evidence" value="ECO:0000304"/>
    <property type="project" value="UniProtKB"/>
</dbReference>
<dbReference type="GO" id="GO:0005925">
    <property type="term" value="C:focal adhesion"/>
    <property type="evidence" value="ECO:0000304"/>
    <property type="project" value="UniProtKB"/>
</dbReference>
<dbReference type="GO" id="GO:0098978">
    <property type="term" value="C:glutamatergic synapse"/>
    <property type="evidence" value="ECO:0000314"/>
    <property type="project" value="SynGO"/>
</dbReference>
<dbReference type="GO" id="GO:0005794">
    <property type="term" value="C:Golgi apparatus"/>
    <property type="evidence" value="ECO:0000304"/>
    <property type="project" value="UniProtKB"/>
</dbReference>
<dbReference type="GO" id="GO:0005770">
    <property type="term" value="C:late endosome"/>
    <property type="evidence" value="ECO:0000304"/>
    <property type="project" value="UniProtKB"/>
</dbReference>
<dbReference type="GO" id="GO:0005739">
    <property type="term" value="C:mitochondrion"/>
    <property type="evidence" value="ECO:0000304"/>
    <property type="project" value="UniProtKB"/>
</dbReference>
<dbReference type="GO" id="GO:0005635">
    <property type="term" value="C:nuclear envelope"/>
    <property type="evidence" value="ECO:0007669"/>
    <property type="project" value="Ensembl"/>
</dbReference>
<dbReference type="GO" id="GO:0005654">
    <property type="term" value="C:nucleoplasm"/>
    <property type="evidence" value="ECO:0000304"/>
    <property type="project" value="Reactome"/>
</dbReference>
<dbReference type="GO" id="GO:0005634">
    <property type="term" value="C:nucleus"/>
    <property type="evidence" value="ECO:0000314"/>
    <property type="project" value="MGI"/>
</dbReference>
<dbReference type="GO" id="GO:0005886">
    <property type="term" value="C:plasma membrane"/>
    <property type="evidence" value="ECO:0000250"/>
    <property type="project" value="UniProtKB"/>
</dbReference>
<dbReference type="GO" id="GO:0031143">
    <property type="term" value="C:pseudopodium"/>
    <property type="evidence" value="ECO:0000314"/>
    <property type="project" value="UniProtKB"/>
</dbReference>
<dbReference type="GO" id="GO:0005524">
    <property type="term" value="F:ATP binding"/>
    <property type="evidence" value="ECO:0007669"/>
    <property type="project" value="UniProtKB-KW"/>
</dbReference>
<dbReference type="GO" id="GO:0140297">
    <property type="term" value="F:DNA-binding transcription factor binding"/>
    <property type="evidence" value="ECO:0007669"/>
    <property type="project" value="Ensembl"/>
</dbReference>
<dbReference type="GO" id="GO:0042802">
    <property type="term" value="F:identical protein binding"/>
    <property type="evidence" value="ECO:0007669"/>
    <property type="project" value="Ensembl"/>
</dbReference>
<dbReference type="GO" id="GO:0004707">
    <property type="term" value="F:MAP kinase activity"/>
    <property type="evidence" value="ECO:0000314"/>
    <property type="project" value="MGI"/>
</dbReference>
<dbReference type="GO" id="GO:0019902">
    <property type="term" value="F:phosphatase binding"/>
    <property type="evidence" value="ECO:0007669"/>
    <property type="project" value="Ensembl"/>
</dbReference>
<dbReference type="GO" id="GO:0001784">
    <property type="term" value="F:phosphotyrosine residue binding"/>
    <property type="evidence" value="ECO:0000315"/>
    <property type="project" value="MGI"/>
</dbReference>
<dbReference type="GO" id="GO:0004672">
    <property type="term" value="F:protein kinase activity"/>
    <property type="evidence" value="ECO:0000314"/>
    <property type="project" value="MGI"/>
</dbReference>
<dbReference type="GO" id="GO:0106310">
    <property type="term" value="F:protein serine kinase activity"/>
    <property type="evidence" value="ECO:0007669"/>
    <property type="project" value="RHEA"/>
</dbReference>
<dbReference type="GO" id="GO:0004674">
    <property type="term" value="F:protein serine/threonine kinase activity"/>
    <property type="evidence" value="ECO:0000266"/>
    <property type="project" value="MGI"/>
</dbReference>
<dbReference type="GO" id="GO:0009887">
    <property type="term" value="P:animal organ morphogenesis"/>
    <property type="evidence" value="ECO:0000314"/>
    <property type="project" value="MGI"/>
</dbReference>
<dbReference type="GO" id="GO:0006915">
    <property type="term" value="P:apoptotic process"/>
    <property type="evidence" value="ECO:0007669"/>
    <property type="project" value="UniProtKB-KW"/>
</dbReference>
<dbReference type="GO" id="GO:0060020">
    <property type="term" value="P:Bergmann glial cell differentiation"/>
    <property type="evidence" value="ECO:0000316"/>
    <property type="project" value="MGI"/>
</dbReference>
<dbReference type="GO" id="GO:0030509">
    <property type="term" value="P:BMP signaling pathway"/>
    <property type="evidence" value="ECO:0007669"/>
    <property type="project" value="Ensembl"/>
</dbReference>
<dbReference type="GO" id="GO:0061308">
    <property type="term" value="P:cardiac neural crest cell development involved in heart development"/>
    <property type="evidence" value="ECO:0000316"/>
    <property type="project" value="MGI"/>
</dbReference>
<dbReference type="GO" id="GO:0051216">
    <property type="term" value="P:cartilage development"/>
    <property type="evidence" value="ECO:0000314"/>
    <property type="project" value="MGI"/>
</dbReference>
<dbReference type="GO" id="GO:0072584">
    <property type="term" value="P:caveolin-mediated endocytosis"/>
    <property type="evidence" value="ECO:0000304"/>
    <property type="project" value="UniProtKB"/>
</dbReference>
<dbReference type="GO" id="GO:0034198">
    <property type="term" value="P:cellular response to amino acid starvation"/>
    <property type="evidence" value="ECO:0007669"/>
    <property type="project" value="Ensembl"/>
</dbReference>
<dbReference type="GO" id="GO:0071260">
    <property type="term" value="P:cellular response to mechanical stimulus"/>
    <property type="evidence" value="ECO:0007669"/>
    <property type="project" value="Ensembl"/>
</dbReference>
<dbReference type="GO" id="GO:0071356">
    <property type="term" value="P:cellular response to tumor necrosis factor"/>
    <property type="evidence" value="ECO:0000316"/>
    <property type="project" value="MGI"/>
</dbReference>
<dbReference type="GO" id="GO:0006974">
    <property type="term" value="P:DNA damage response"/>
    <property type="evidence" value="ECO:0000314"/>
    <property type="project" value="MGI"/>
</dbReference>
<dbReference type="GO" id="GO:0006351">
    <property type="term" value="P:DNA-templated transcription"/>
    <property type="evidence" value="ECO:0000315"/>
    <property type="project" value="UniProtKB"/>
</dbReference>
<dbReference type="GO" id="GO:0007173">
    <property type="term" value="P:epidermal growth factor receptor signaling pathway"/>
    <property type="evidence" value="ECO:0007669"/>
    <property type="project" value="Ensembl"/>
</dbReference>
<dbReference type="GO" id="GO:0038133">
    <property type="term" value="P:ERBB2-ERBB3 signaling pathway"/>
    <property type="evidence" value="ECO:0000314"/>
    <property type="project" value="MGI"/>
</dbReference>
<dbReference type="GO" id="GO:0070371">
    <property type="term" value="P:ERK1 and ERK2 cascade"/>
    <property type="evidence" value="ECO:0000316"/>
    <property type="project" value="MGI"/>
</dbReference>
<dbReference type="GO" id="GO:0060324">
    <property type="term" value="P:face development"/>
    <property type="evidence" value="ECO:0000316"/>
    <property type="project" value="MGI"/>
</dbReference>
<dbReference type="GO" id="GO:0008286">
    <property type="term" value="P:insulin receptor signaling pathway"/>
    <property type="evidence" value="ECO:0000314"/>
    <property type="project" value="MGI"/>
</dbReference>
<dbReference type="GO" id="GO:0048009">
    <property type="term" value="P:insulin-like growth factor receptor signaling pathway"/>
    <property type="evidence" value="ECO:0000314"/>
    <property type="project" value="MGI"/>
</dbReference>
<dbReference type="GO" id="GO:0070498">
    <property type="term" value="P:interleukin-1-mediated signaling pathway"/>
    <property type="evidence" value="ECO:0007669"/>
    <property type="project" value="Ensembl"/>
</dbReference>
<dbReference type="GO" id="GO:0061514">
    <property type="term" value="P:interleukin-34-mediated signaling pathway"/>
    <property type="evidence" value="ECO:0007669"/>
    <property type="project" value="Ensembl"/>
</dbReference>
<dbReference type="GO" id="GO:0031663">
    <property type="term" value="P:lipopolysaccharide-mediated signaling pathway"/>
    <property type="evidence" value="ECO:0000314"/>
    <property type="project" value="MGI"/>
</dbReference>
<dbReference type="GO" id="GO:0060425">
    <property type="term" value="P:lung morphogenesis"/>
    <property type="evidence" value="ECO:0000316"/>
    <property type="project" value="MGI"/>
</dbReference>
<dbReference type="GO" id="GO:0000165">
    <property type="term" value="P:MAPK cascade"/>
    <property type="evidence" value="ECO:0000316"/>
    <property type="project" value="MGI"/>
</dbReference>
<dbReference type="GO" id="GO:0050804">
    <property type="term" value="P:modulation of chemical synaptic transmission"/>
    <property type="evidence" value="ECO:0000314"/>
    <property type="project" value="SynGO"/>
</dbReference>
<dbReference type="GO" id="GO:0042552">
    <property type="term" value="P:myelination"/>
    <property type="evidence" value="ECO:0000315"/>
    <property type="project" value="MGI"/>
</dbReference>
<dbReference type="GO" id="GO:0090370">
    <property type="term" value="P:negative regulation of cholesterol efflux"/>
    <property type="evidence" value="ECO:0000315"/>
    <property type="project" value="BHF-UCL"/>
</dbReference>
<dbReference type="GO" id="GO:1904262">
    <property type="term" value="P:negative regulation of TORC1 signaling"/>
    <property type="evidence" value="ECO:0007669"/>
    <property type="project" value="Ensembl"/>
</dbReference>
<dbReference type="GO" id="GO:0014032">
    <property type="term" value="P:neural crest cell development"/>
    <property type="evidence" value="ECO:0000316"/>
    <property type="project" value="MGI"/>
</dbReference>
<dbReference type="GO" id="GO:0042473">
    <property type="term" value="P:outer ear morphogenesis"/>
    <property type="evidence" value="ECO:0000316"/>
    <property type="project" value="MGI"/>
</dbReference>
<dbReference type="GO" id="GO:0070374">
    <property type="term" value="P:positive regulation of ERK1 and ERK2 cascade"/>
    <property type="evidence" value="ECO:0007669"/>
    <property type="project" value="Ensembl"/>
</dbReference>
<dbReference type="GO" id="GO:0010759">
    <property type="term" value="P:positive regulation of macrophage chemotaxis"/>
    <property type="evidence" value="ECO:0007669"/>
    <property type="project" value="Ensembl"/>
</dbReference>
<dbReference type="GO" id="GO:0120041">
    <property type="term" value="P:positive regulation of macrophage proliferation"/>
    <property type="evidence" value="ECO:0007669"/>
    <property type="project" value="Ensembl"/>
</dbReference>
<dbReference type="GO" id="GO:0032206">
    <property type="term" value="P:positive regulation of telomere maintenance"/>
    <property type="evidence" value="ECO:0007669"/>
    <property type="project" value="Ensembl"/>
</dbReference>
<dbReference type="GO" id="GO:0045944">
    <property type="term" value="P:positive regulation of transcription by RNA polymerase II"/>
    <property type="evidence" value="ECO:0007669"/>
    <property type="project" value="Ensembl"/>
</dbReference>
<dbReference type="GO" id="GO:1904417">
    <property type="term" value="P:positive regulation of xenophagy"/>
    <property type="evidence" value="ECO:0000316"/>
    <property type="project" value="MGI"/>
</dbReference>
<dbReference type="GO" id="GO:0030641">
    <property type="term" value="P:regulation of cellular pH"/>
    <property type="evidence" value="ECO:0000315"/>
    <property type="project" value="MGI"/>
</dbReference>
<dbReference type="GO" id="GO:0051493">
    <property type="term" value="P:regulation of cytoskeleton organization"/>
    <property type="evidence" value="ECO:0000304"/>
    <property type="project" value="UniProtKB"/>
</dbReference>
<dbReference type="GO" id="GO:0051090">
    <property type="term" value="P:regulation of DNA-binding transcription factor activity"/>
    <property type="evidence" value="ECO:0000315"/>
    <property type="project" value="UniProtKB"/>
</dbReference>
<dbReference type="GO" id="GO:2000641">
    <property type="term" value="P:regulation of early endosome to late endosome transport"/>
    <property type="evidence" value="ECO:0000304"/>
    <property type="project" value="UniProtKB"/>
</dbReference>
<dbReference type="GO" id="GO:0090170">
    <property type="term" value="P:regulation of Golgi inheritance"/>
    <property type="evidence" value="ECO:0000304"/>
    <property type="project" value="UniProtKB"/>
</dbReference>
<dbReference type="GO" id="GO:0030278">
    <property type="term" value="P:regulation of ossification"/>
    <property type="evidence" value="ECO:0000316"/>
    <property type="project" value="MGI"/>
</dbReference>
<dbReference type="GO" id="GO:0032872">
    <property type="term" value="P:regulation of stress-activated MAPK cascade"/>
    <property type="evidence" value="ECO:0000304"/>
    <property type="project" value="UniProtKB"/>
</dbReference>
<dbReference type="GO" id="GO:0070849">
    <property type="term" value="P:response to epidermal growth factor"/>
    <property type="evidence" value="ECO:0000250"/>
    <property type="project" value="UniProtKB"/>
</dbReference>
<dbReference type="GO" id="GO:0043330">
    <property type="term" value="P:response to exogenous dsRNA"/>
    <property type="evidence" value="ECO:0000314"/>
    <property type="project" value="MGI"/>
</dbReference>
<dbReference type="GO" id="GO:0032496">
    <property type="term" value="P:response to lipopolysaccharide"/>
    <property type="evidence" value="ECO:0000314"/>
    <property type="project" value="MGI"/>
</dbReference>
<dbReference type="GO" id="GO:0014044">
    <property type="term" value="P:Schwann cell development"/>
    <property type="evidence" value="ECO:0000315"/>
    <property type="project" value="MGI"/>
</dbReference>
<dbReference type="GO" id="GO:0019233">
    <property type="term" value="P:sensory perception of pain"/>
    <property type="evidence" value="ECO:0000315"/>
    <property type="project" value="UniProtKB"/>
</dbReference>
<dbReference type="GO" id="GO:0007165">
    <property type="term" value="P:signal transduction"/>
    <property type="evidence" value="ECO:0000304"/>
    <property type="project" value="MGI"/>
</dbReference>
<dbReference type="GO" id="GO:0042770">
    <property type="term" value="P:signal transduction in response to DNA damage"/>
    <property type="evidence" value="ECO:0007669"/>
    <property type="project" value="Ensembl"/>
</dbReference>
<dbReference type="GO" id="GO:0051403">
    <property type="term" value="P:stress-activated MAPK cascade"/>
    <property type="evidence" value="ECO:0007669"/>
    <property type="project" value="Ensembl"/>
</dbReference>
<dbReference type="GO" id="GO:0048538">
    <property type="term" value="P:thymus development"/>
    <property type="evidence" value="ECO:0000316"/>
    <property type="project" value="MGI"/>
</dbReference>
<dbReference type="GO" id="GO:0030878">
    <property type="term" value="P:thyroid gland development"/>
    <property type="evidence" value="ECO:0000316"/>
    <property type="project" value="MGI"/>
</dbReference>
<dbReference type="GO" id="GO:0060440">
    <property type="term" value="P:trachea formation"/>
    <property type="evidence" value="ECO:0000316"/>
    <property type="project" value="MGI"/>
</dbReference>
<dbReference type="GO" id="GO:0098792">
    <property type="term" value="P:xenophagy"/>
    <property type="evidence" value="ECO:0000316"/>
    <property type="project" value="MGI"/>
</dbReference>
<dbReference type="CDD" id="cd07849">
    <property type="entry name" value="STKc_ERK1_2_like"/>
    <property type="match status" value="1"/>
</dbReference>
<dbReference type="FunFam" id="1.10.510.10:FF:000624">
    <property type="entry name" value="Mitogen-activated protein kinase"/>
    <property type="match status" value="1"/>
</dbReference>
<dbReference type="FunFam" id="3.30.200.20:FF:000585">
    <property type="entry name" value="Mitogen-activated protein kinase"/>
    <property type="match status" value="1"/>
</dbReference>
<dbReference type="FunFam" id="3.30.200.20:FF:001116">
    <property type="entry name" value="Mitogen-activated protein kinase 3"/>
    <property type="match status" value="1"/>
</dbReference>
<dbReference type="Gene3D" id="3.30.200.20">
    <property type="entry name" value="Phosphorylase Kinase, domain 1"/>
    <property type="match status" value="1"/>
</dbReference>
<dbReference type="Gene3D" id="1.10.510.10">
    <property type="entry name" value="Transferase(Phosphotransferase) domain 1"/>
    <property type="match status" value="1"/>
</dbReference>
<dbReference type="InterPro" id="IPR011009">
    <property type="entry name" value="Kinase-like_dom_sf"/>
</dbReference>
<dbReference type="InterPro" id="IPR050117">
    <property type="entry name" value="MAP_kinase"/>
</dbReference>
<dbReference type="InterPro" id="IPR003527">
    <property type="entry name" value="MAP_kinase_CS"/>
</dbReference>
<dbReference type="InterPro" id="IPR008349">
    <property type="entry name" value="MAPK_ERK1/2"/>
</dbReference>
<dbReference type="InterPro" id="IPR000719">
    <property type="entry name" value="Prot_kinase_dom"/>
</dbReference>
<dbReference type="InterPro" id="IPR017441">
    <property type="entry name" value="Protein_kinase_ATP_BS"/>
</dbReference>
<dbReference type="InterPro" id="IPR008271">
    <property type="entry name" value="Ser/Thr_kinase_AS"/>
</dbReference>
<dbReference type="PANTHER" id="PTHR24055">
    <property type="entry name" value="MITOGEN-ACTIVATED PROTEIN KINASE"/>
    <property type="match status" value="1"/>
</dbReference>
<dbReference type="Pfam" id="PF00069">
    <property type="entry name" value="Pkinase"/>
    <property type="match status" value="1"/>
</dbReference>
<dbReference type="PRINTS" id="PR01770">
    <property type="entry name" value="ERK1ERK2MAPK"/>
</dbReference>
<dbReference type="SMART" id="SM00220">
    <property type="entry name" value="S_TKc"/>
    <property type="match status" value="1"/>
</dbReference>
<dbReference type="SUPFAM" id="SSF56112">
    <property type="entry name" value="Protein kinase-like (PK-like)"/>
    <property type="match status" value="1"/>
</dbReference>
<dbReference type="PROSITE" id="PS01351">
    <property type="entry name" value="MAPK"/>
    <property type="match status" value="1"/>
</dbReference>
<dbReference type="PROSITE" id="PS00107">
    <property type="entry name" value="PROTEIN_KINASE_ATP"/>
    <property type="match status" value="1"/>
</dbReference>
<dbReference type="PROSITE" id="PS50011">
    <property type="entry name" value="PROTEIN_KINASE_DOM"/>
    <property type="match status" value="1"/>
</dbReference>
<dbReference type="PROSITE" id="PS00108">
    <property type="entry name" value="PROTEIN_KINASE_ST"/>
    <property type="match status" value="1"/>
</dbReference>
<evidence type="ECO:0000250" key="1"/>
<evidence type="ECO:0000250" key="2">
    <source>
        <dbReference type="UniProtKB" id="P21708"/>
    </source>
</evidence>
<evidence type="ECO:0000250" key="3">
    <source>
        <dbReference type="UniProtKB" id="P27361"/>
    </source>
</evidence>
<evidence type="ECO:0000255" key="4">
    <source>
        <dbReference type="PROSITE-ProRule" id="PRU00159"/>
    </source>
</evidence>
<evidence type="ECO:0000255" key="5">
    <source>
        <dbReference type="PROSITE-ProRule" id="PRU10027"/>
    </source>
</evidence>
<evidence type="ECO:0000269" key="6">
    <source>
    </source>
</evidence>
<evidence type="ECO:0000269" key="7">
    <source>
    </source>
</evidence>
<evidence type="ECO:0000269" key="8">
    <source>
    </source>
</evidence>
<evidence type="ECO:0000269" key="9">
    <source>
    </source>
</evidence>
<evidence type="ECO:0000269" key="10">
    <source>
    </source>
</evidence>
<evidence type="ECO:0000269" key="11">
    <source ref="2"/>
</evidence>
<evidence type="ECO:0000305" key="12"/>
<evidence type="ECO:0007744" key="13">
    <source>
    </source>
</evidence>
<evidence type="ECO:0007744" key="14">
    <source>
    </source>
</evidence>
<evidence type="ECO:0007744" key="15">
    <source>
    </source>
</evidence>
<evidence type="ECO:0007744" key="16">
    <source>
    </source>
</evidence>
<feature type="initiator methionine" description="Removed" evidence="11">
    <location>
        <position position="1"/>
    </location>
</feature>
<feature type="chain" id="PRO_0000186252" description="Mitogen-activated protein kinase 3">
    <location>
        <begin position="2"/>
        <end position="380"/>
    </location>
</feature>
<feature type="domain" description="Protein kinase" evidence="4">
    <location>
        <begin position="43"/>
        <end position="331"/>
    </location>
</feature>
<feature type="short sequence motif" description="TXY">
    <location>
        <begin position="203"/>
        <end position="205"/>
    </location>
</feature>
<feature type="active site" description="Proton acceptor" evidence="4 5">
    <location>
        <position position="167"/>
    </location>
</feature>
<feature type="binding site" evidence="4">
    <location>
        <begin position="49"/>
        <end position="57"/>
    </location>
    <ligand>
        <name>ATP</name>
        <dbReference type="ChEBI" id="CHEBI:30616"/>
    </ligand>
</feature>
<feature type="binding site" evidence="4">
    <location>
        <position position="72"/>
    </location>
    <ligand>
        <name>ATP</name>
        <dbReference type="ChEBI" id="CHEBI:30616"/>
    </ligand>
</feature>
<feature type="modified residue" description="N-acetylalanine" evidence="11">
    <location>
        <position position="2"/>
    </location>
</feature>
<feature type="modified residue" description="Phosphothreonine" evidence="3">
    <location>
        <position position="199"/>
    </location>
</feature>
<feature type="modified residue" description="Phosphothreonine; by MAP2K1 and MAP2K2" evidence="13 14 15 16">
    <location>
        <position position="203"/>
    </location>
</feature>
<feature type="modified residue" description="Phosphotyrosine; by MAP2K1 and MAP2K2" evidence="13 14 15 16">
    <location>
        <position position="205"/>
    </location>
</feature>
<feature type="modified residue" description="Phosphothreonine; by autocatalysis" evidence="3">
    <location>
        <position position="208"/>
    </location>
</feature>
<feature type="sequence conflict" description="In Ref. 7; CAA45889 and 8; no nucleotide entry." evidence="12" ref="7 8">
    <original>T</original>
    <variation>P</variation>
    <location>
        <position position="178"/>
    </location>
</feature>
<keyword id="KW-0007">Acetylation</keyword>
<keyword id="KW-0053">Apoptosis</keyword>
<keyword id="KW-0067">ATP-binding</keyword>
<keyword id="KW-0131">Cell cycle</keyword>
<keyword id="KW-0965">Cell junction</keyword>
<keyword id="KW-0963">Cytoplasm</keyword>
<keyword id="KW-0903">Direct protein sequencing</keyword>
<keyword id="KW-0418">Kinase</keyword>
<keyword id="KW-0472">Membrane</keyword>
<keyword id="KW-0547">Nucleotide-binding</keyword>
<keyword id="KW-0539">Nucleus</keyword>
<keyword id="KW-0597">Phosphoprotein</keyword>
<keyword id="KW-1185">Reference proteome</keyword>
<keyword id="KW-0723">Serine/threonine-protein kinase</keyword>
<keyword id="KW-0808">Transferase</keyword>
<keyword id="KW-0832">Ubl conjugation</keyword>
<accession>Q63844</accession>
<accession>Q61531</accession>
<accession>Q8K0X5</accession>
<accession>Q91YW5</accession>
<organism>
    <name type="scientific">Mus musculus</name>
    <name type="common">Mouse</name>
    <dbReference type="NCBI Taxonomy" id="10090"/>
    <lineage>
        <taxon>Eukaryota</taxon>
        <taxon>Metazoa</taxon>
        <taxon>Chordata</taxon>
        <taxon>Craniata</taxon>
        <taxon>Vertebrata</taxon>
        <taxon>Euteleostomi</taxon>
        <taxon>Mammalia</taxon>
        <taxon>Eutheria</taxon>
        <taxon>Euarchontoglires</taxon>
        <taxon>Glires</taxon>
        <taxon>Rodentia</taxon>
        <taxon>Myomorpha</taxon>
        <taxon>Muroidea</taxon>
        <taxon>Muridae</taxon>
        <taxon>Murinae</taxon>
        <taxon>Mus</taxon>
        <taxon>Mus</taxon>
    </lineage>
</organism>
<gene>
    <name type="primary">Mapk3</name>
    <name type="synonym">Erk1</name>
    <name type="synonym">Prkm3</name>
</gene>
<name>MK03_MOUSE</name>
<sequence>MAAAAAAPGGGGGEPRGTAGVVPVVPGEVEVVKGQPFDVGPRYTQLQYIGEGAYGMVSSAYDHVRKTRVAIKKISPFEHQTYCQRTLREIQILLRFRHENVIGIRDILRAPTLEAMRDVYIVQDLMETDLYKLLKSQQLSNDHICYFLYQILRGLKYIHSANVLHRDLKPSNLLINTTCDLKICDFGLARIADPEHDHTGFLTEYVATRWYRAPEIMLNSKGYTKSIDIWSVGCILAEMLSNRPIFPGKHYLDQLNHILGILGSPSQEDLNCIINMKARNYLQSLPSKTKVAWAKLFPKSDSKALDLLDRMLTFNPNKRITVEEALAHPYLEQYYDPTDEPVAEEPFTFDMELDDLPKERLKELIFQETARFQPGAPEGP</sequence>
<proteinExistence type="evidence at protein level"/>